<evidence type="ECO:0000255" key="1">
    <source>
        <dbReference type="HAMAP-Rule" id="MF_01357"/>
    </source>
</evidence>
<keyword id="KW-0150">Chloroplast</keyword>
<keyword id="KW-0472">Membrane</keyword>
<keyword id="KW-0520">NAD</keyword>
<keyword id="KW-0521">NADP</keyword>
<keyword id="KW-0934">Plastid</keyword>
<keyword id="KW-0618">Plastoquinone</keyword>
<keyword id="KW-0874">Quinone</keyword>
<keyword id="KW-0793">Thylakoid</keyword>
<keyword id="KW-1278">Translocase</keyword>
<keyword id="KW-0813">Transport</keyword>
<dbReference type="EC" id="7.1.1.-" evidence="1"/>
<dbReference type="EMBL" id="DQ821119">
    <property type="protein sequence ID" value="ABG79603.1"/>
    <property type="molecule type" value="Genomic_DNA"/>
</dbReference>
<dbReference type="RefSeq" id="YP_001023704.1">
    <property type="nucleotide sequence ID" value="NC_008829.1"/>
</dbReference>
<dbReference type="SMR" id="A2T336"/>
<dbReference type="GeneID" id="4788128"/>
<dbReference type="GO" id="GO:0009535">
    <property type="term" value="C:chloroplast thylakoid membrane"/>
    <property type="evidence" value="ECO:0007669"/>
    <property type="project" value="UniProtKB-SubCell"/>
</dbReference>
<dbReference type="GO" id="GO:0008137">
    <property type="term" value="F:NADH dehydrogenase (ubiquinone) activity"/>
    <property type="evidence" value="ECO:0007669"/>
    <property type="project" value="InterPro"/>
</dbReference>
<dbReference type="GO" id="GO:0048038">
    <property type="term" value="F:quinone binding"/>
    <property type="evidence" value="ECO:0007669"/>
    <property type="project" value="UniProtKB-KW"/>
</dbReference>
<dbReference type="GO" id="GO:0019684">
    <property type="term" value="P:photosynthesis, light reaction"/>
    <property type="evidence" value="ECO:0007669"/>
    <property type="project" value="UniProtKB-UniRule"/>
</dbReference>
<dbReference type="Gene3D" id="3.30.460.80">
    <property type="entry name" value="NADH:ubiquinone oxidoreductase, 30kDa subunit"/>
    <property type="match status" value="1"/>
</dbReference>
<dbReference type="HAMAP" id="MF_01357">
    <property type="entry name" value="NDH1_NuoC"/>
    <property type="match status" value="1"/>
</dbReference>
<dbReference type="InterPro" id="IPR010218">
    <property type="entry name" value="NADH_DH_suC"/>
</dbReference>
<dbReference type="InterPro" id="IPR037232">
    <property type="entry name" value="NADH_quin_OxRdtase_su_C/D-like"/>
</dbReference>
<dbReference type="InterPro" id="IPR001268">
    <property type="entry name" value="NADH_UbQ_OxRdtase_30kDa_su"/>
</dbReference>
<dbReference type="InterPro" id="IPR020396">
    <property type="entry name" value="NADH_UbQ_OxRdtase_CS"/>
</dbReference>
<dbReference type="NCBIfam" id="NF009141">
    <property type="entry name" value="PRK12494.1"/>
    <property type="match status" value="1"/>
</dbReference>
<dbReference type="PANTHER" id="PTHR10884:SF14">
    <property type="entry name" value="NADH DEHYDROGENASE [UBIQUINONE] IRON-SULFUR PROTEIN 3, MITOCHONDRIAL"/>
    <property type="match status" value="1"/>
</dbReference>
<dbReference type="PANTHER" id="PTHR10884">
    <property type="entry name" value="NADH DEHYDROGENASE UBIQUINONE IRON-SULFUR PROTEIN 3"/>
    <property type="match status" value="1"/>
</dbReference>
<dbReference type="Pfam" id="PF00329">
    <property type="entry name" value="Complex1_30kDa"/>
    <property type="match status" value="1"/>
</dbReference>
<dbReference type="SUPFAM" id="SSF143243">
    <property type="entry name" value="Nqo5-like"/>
    <property type="match status" value="1"/>
</dbReference>
<dbReference type="PROSITE" id="PS00542">
    <property type="entry name" value="COMPLEX1_30K"/>
    <property type="match status" value="1"/>
</dbReference>
<comment type="function">
    <text evidence="1">NDH shuttles electrons from NAD(P)H:plastoquinone, via FMN and iron-sulfur (Fe-S) centers, to quinones in the photosynthetic chain and possibly in a chloroplast respiratory chain. The immediate electron acceptor for the enzyme in this species is believed to be plastoquinone. Couples the redox reaction to proton translocation, and thus conserves the redox energy in a proton gradient.</text>
</comment>
<comment type="catalytic activity">
    <reaction evidence="1">
        <text>a plastoquinone + NADH + (n+1) H(+)(in) = a plastoquinol + NAD(+) + n H(+)(out)</text>
        <dbReference type="Rhea" id="RHEA:42608"/>
        <dbReference type="Rhea" id="RHEA-COMP:9561"/>
        <dbReference type="Rhea" id="RHEA-COMP:9562"/>
        <dbReference type="ChEBI" id="CHEBI:15378"/>
        <dbReference type="ChEBI" id="CHEBI:17757"/>
        <dbReference type="ChEBI" id="CHEBI:57540"/>
        <dbReference type="ChEBI" id="CHEBI:57945"/>
        <dbReference type="ChEBI" id="CHEBI:62192"/>
    </reaction>
</comment>
<comment type="catalytic activity">
    <reaction evidence="1">
        <text>a plastoquinone + NADPH + (n+1) H(+)(in) = a plastoquinol + NADP(+) + n H(+)(out)</text>
        <dbReference type="Rhea" id="RHEA:42612"/>
        <dbReference type="Rhea" id="RHEA-COMP:9561"/>
        <dbReference type="Rhea" id="RHEA-COMP:9562"/>
        <dbReference type="ChEBI" id="CHEBI:15378"/>
        <dbReference type="ChEBI" id="CHEBI:17757"/>
        <dbReference type="ChEBI" id="CHEBI:57783"/>
        <dbReference type="ChEBI" id="CHEBI:58349"/>
        <dbReference type="ChEBI" id="CHEBI:62192"/>
    </reaction>
</comment>
<comment type="subunit">
    <text evidence="1">NDH is composed of at least 16 different subunits, 5 of which are encoded in the nucleus.</text>
</comment>
<comment type="subcellular location">
    <subcellularLocation>
        <location evidence="1">Plastid</location>
        <location evidence="1">Chloroplast thylakoid membrane</location>
        <topology evidence="1">Peripheral membrane protein</topology>
        <orientation evidence="1">Stromal side</orientation>
    </subcellularLocation>
</comment>
<comment type="similarity">
    <text evidence="1">Belongs to the complex I 30 kDa subunit family.</text>
</comment>
<geneLocation type="chloroplast"/>
<accession>A2T336</accession>
<sequence length="158" mass="18593">MQGRLSAWLAKHQLAHRPLGFDYQGIEILQIRPQDWPSIAVALYVYGFNYLRSQCAYDVTPGGGLASVYHLTKVQDDADQPEEVCIKIFVSREDPRIPSVFWIWKSSDFQERESYDMFGIIYESHPRLKRILMPESWIGWPLRKDYIVPNFYELQDAY</sequence>
<proteinExistence type="inferred from homology"/>
<reference key="1">
    <citation type="journal article" date="2007" name="Am. Fern J.">
        <title>The complete plastid genome sequence of Angiopteris evecta (G. Forst.) Hoffm. (Marattiaceae).</title>
        <authorList>
            <person name="Roper J.M."/>
            <person name="Hansen S.K."/>
            <person name="Wolf P.G."/>
            <person name="Karol K.G."/>
            <person name="Mandoli D.F."/>
            <person name="Everett K.D.E."/>
            <person name="Kuehl J."/>
            <person name="Boore J.L."/>
        </authorList>
    </citation>
    <scope>NUCLEOTIDE SEQUENCE [LARGE SCALE GENOMIC DNA]</scope>
</reference>
<feature type="chain" id="PRO_0000358241" description="NAD(P)H-quinone oxidoreductase subunit J, chloroplastic">
    <location>
        <begin position="1"/>
        <end position="158"/>
    </location>
</feature>
<organism>
    <name type="scientific">Angiopteris evecta</name>
    <name type="common">Mule's foot fern</name>
    <name type="synonym">Polypodium evectum</name>
    <dbReference type="NCBI Taxonomy" id="13825"/>
    <lineage>
        <taxon>Eukaryota</taxon>
        <taxon>Viridiplantae</taxon>
        <taxon>Streptophyta</taxon>
        <taxon>Embryophyta</taxon>
        <taxon>Tracheophyta</taxon>
        <taxon>Polypodiopsida</taxon>
        <taxon>Marattiidae</taxon>
        <taxon>Marattiales</taxon>
        <taxon>Marattiaceae</taxon>
        <taxon>Angiopteris</taxon>
    </lineage>
</organism>
<gene>
    <name evidence="1" type="primary">ndhJ</name>
</gene>
<name>NDHJ_ANGEV</name>
<protein>
    <recommendedName>
        <fullName evidence="1">NAD(P)H-quinone oxidoreductase subunit J, chloroplastic</fullName>
        <ecNumber evidence="1">7.1.1.-</ecNumber>
    </recommendedName>
    <alternativeName>
        <fullName>NAD(P)H dehydrogenase subunit J</fullName>
    </alternativeName>
    <alternativeName>
        <fullName evidence="1">NADH-plastoquinone oxidoreductase subunit J</fullName>
    </alternativeName>
</protein>